<proteinExistence type="inferred from homology"/>
<comment type="function">
    <text evidence="1">Converts heme B (protoheme IX) to heme O by substitution of the vinyl group on carbon 2 of heme B porphyrin ring with a hydroxyethyl farnesyl side group.</text>
</comment>
<comment type="catalytic activity">
    <reaction evidence="1">
        <text>heme b + (2E,6E)-farnesyl diphosphate + H2O = Fe(II)-heme o + diphosphate</text>
        <dbReference type="Rhea" id="RHEA:28070"/>
        <dbReference type="ChEBI" id="CHEBI:15377"/>
        <dbReference type="ChEBI" id="CHEBI:33019"/>
        <dbReference type="ChEBI" id="CHEBI:60344"/>
        <dbReference type="ChEBI" id="CHEBI:60530"/>
        <dbReference type="ChEBI" id="CHEBI:175763"/>
        <dbReference type="EC" id="2.5.1.141"/>
    </reaction>
</comment>
<comment type="pathway">
    <text evidence="1">Porphyrin-containing compound metabolism; heme O biosynthesis; heme O from protoheme: step 1/1.</text>
</comment>
<comment type="subunit">
    <text evidence="1">Interacts with CtaA.</text>
</comment>
<comment type="subcellular location">
    <subcellularLocation>
        <location evidence="1">Cell membrane</location>
        <topology evidence="1">Multi-pass membrane protein</topology>
    </subcellularLocation>
</comment>
<comment type="miscellaneous">
    <text evidence="1">Carbon 2 of the heme B porphyrin ring is defined according to the Fischer nomenclature.</text>
</comment>
<comment type="similarity">
    <text evidence="1">Belongs to the UbiA prenyltransferase family. Protoheme IX farnesyltransferase subfamily.</text>
</comment>
<gene>
    <name evidence="1" type="primary">ctaB</name>
    <name type="ordered locus">SAR1090</name>
</gene>
<evidence type="ECO:0000255" key="1">
    <source>
        <dbReference type="HAMAP-Rule" id="MF_00154"/>
    </source>
</evidence>
<accession>Q6GHW9</accession>
<protein>
    <recommendedName>
        <fullName evidence="1">Protoheme IX farnesyltransferase</fullName>
        <ecNumber evidence="1">2.5.1.141</ecNumber>
    </recommendedName>
    <alternativeName>
        <fullName evidence="1">Heme B farnesyltransferase</fullName>
    </alternativeName>
    <alternativeName>
        <fullName evidence="1">Heme O synthase</fullName>
    </alternativeName>
</protein>
<sequence>MSKEHTLSQNISRVNFKELQQIIKMGLVQGNLIPAFAGAWLAVVMTNHSFLSSIPQILLMLLGSTLIMGGACALNNYYDQDIDRIMPSKQNRPTVNNRITDQNLLLLSFGMMLVGEICLFLLNIPSGVLGLMGIVGYVSYYSIWSKRHTTWNTVIGSFPGAVPPLIGWVAIEGQISLTAIALFLVVFCWQPIHFYALAIKRKDEYALANIPMLPSVKGFKRTRVSMFIWLIILLPVPLLLINLGVVFVVLATLLNLGWIALGLTTFKKNSDQTKWATQMFIYSLNYLVIFFVLAVIVSLLTLI</sequence>
<keyword id="KW-1003">Cell membrane</keyword>
<keyword id="KW-0350">Heme biosynthesis</keyword>
<keyword id="KW-0472">Membrane</keyword>
<keyword id="KW-0808">Transferase</keyword>
<keyword id="KW-0812">Transmembrane</keyword>
<keyword id="KW-1133">Transmembrane helix</keyword>
<feature type="chain" id="PRO_0000327156" description="Protoheme IX farnesyltransferase">
    <location>
        <begin position="1"/>
        <end position="303"/>
    </location>
</feature>
<feature type="transmembrane region" description="Helical" evidence="1">
    <location>
        <begin position="25"/>
        <end position="45"/>
    </location>
</feature>
<feature type="transmembrane region" description="Helical" evidence="1">
    <location>
        <begin position="54"/>
        <end position="74"/>
    </location>
</feature>
<feature type="transmembrane region" description="Helical" evidence="1">
    <location>
        <begin position="104"/>
        <end position="124"/>
    </location>
</feature>
<feature type="transmembrane region" description="Helical" evidence="1">
    <location>
        <begin position="125"/>
        <end position="145"/>
    </location>
</feature>
<feature type="transmembrane region" description="Helical" evidence="1">
    <location>
        <begin position="151"/>
        <end position="171"/>
    </location>
</feature>
<feature type="transmembrane region" description="Helical" evidence="1">
    <location>
        <begin position="179"/>
        <end position="199"/>
    </location>
</feature>
<feature type="transmembrane region" description="Helical" evidence="1">
    <location>
        <begin position="227"/>
        <end position="247"/>
    </location>
</feature>
<feature type="transmembrane region" description="Helical" evidence="1">
    <location>
        <begin position="248"/>
        <end position="268"/>
    </location>
</feature>
<feature type="transmembrane region" description="Helical" evidence="1">
    <location>
        <begin position="280"/>
        <end position="300"/>
    </location>
</feature>
<dbReference type="EC" id="2.5.1.141" evidence="1"/>
<dbReference type="EMBL" id="BX571856">
    <property type="protein sequence ID" value="CAG40092.1"/>
    <property type="molecule type" value="Genomic_DNA"/>
</dbReference>
<dbReference type="SMR" id="Q6GHW9"/>
<dbReference type="KEGG" id="sar:SAR1090"/>
<dbReference type="HOGENOM" id="CLU_029631_0_0_9"/>
<dbReference type="UniPathway" id="UPA00834">
    <property type="reaction ID" value="UER00712"/>
</dbReference>
<dbReference type="Proteomes" id="UP000000596">
    <property type="component" value="Chromosome"/>
</dbReference>
<dbReference type="GO" id="GO:0005886">
    <property type="term" value="C:plasma membrane"/>
    <property type="evidence" value="ECO:0007669"/>
    <property type="project" value="UniProtKB-SubCell"/>
</dbReference>
<dbReference type="GO" id="GO:0008495">
    <property type="term" value="F:protoheme IX farnesyltransferase activity"/>
    <property type="evidence" value="ECO:0007669"/>
    <property type="project" value="UniProtKB-UniRule"/>
</dbReference>
<dbReference type="GO" id="GO:0048034">
    <property type="term" value="P:heme O biosynthetic process"/>
    <property type="evidence" value="ECO:0007669"/>
    <property type="project" value="UniProtKB-UniRule"/>
</dbReference>
<dbReference type="CDD" id="cd13957">
    <property type="entry name" value="PT_UbiA_Cox10"/>
    <property type="match status" value="1"/>
</dbReference>
<dbReference type="Gene3D" id="1.10.357.140">
    <property type="entry name" value="UbiA prenyltransferase"/>
    <property type="match status" value="1"/>
</dbReference>
<dbReference type="HAMAP" id="MF_00154">
    <property type="entry name" value="CyoE_CtaB"/>
    <property type="match status" value="1"/>
</dbReference>
<dbReference type="InterPro" id="IPR006369">
    <property type="entry name" value="Protohaem_IX_farnesylTrfase"/>
</dbReference>
<dbReference type="InterPro" id="IPR000537">
    <property type="entry name" value="UbiA_prenyltransferase"/>
</dbReference>
<dbReference type="InterPro" id="IPR044878">
    <property type="entry name" value="UbiA_sf"/>
</dbReference>
<dbReference type="NCBIfam" id="TIGR01473">
    <property type="entry name" value="cyoE_ctaB"/>
    <property type="match status" value="1"/>
</dbReference>
<dbReference type="PANTHER" id="PTHR43448">
    <property type="entry name" value="PROTOHEME IX FARNESYLTRANSFERASE, MITOCHONDRIAL"/>
    <property type="match status" value="1"/>
</dbReference>
<dbReference type="PANTHER" id="PTHR43448:SF2">
    <property type="entry name" value="PROTOHEME IX FARNESYLTRANSFERASE, MITOCHONDRIAL"/>
    <property type="match status" value="1"/>
</dbReference>
<dbReference type="Pfam" id="PF01040">
    <property type="entry name" value="UbiA"/>
    <property type="match status" value="1"/>
</dbReference>
<name>COXX_STAAR</name>
<reference key="1">
    <citation type="journal article" date="2004" name="Proc. Natl. Acad. Sci. U.S.A.">
        <title>Complete genomes of two clinical Staphylococcus aureus strains: evidence for the rapid evolution of virulence and drug resistance.</title>
        <authorList>
            <person name="Holden M.T.G."/>
            <person name="Feil E.J."/>
            <person name="Lindsay J.A."/>
            <person name="Peacock S.J."/>
            <person name="Day N.P.J."/>
            <person name="Enright M.C."/>
            <person name="Foster T.J."/>
            <person name="Moore C.E."/>
            <person name="Hurst L."/>
            <person name="Atkin R."/>
            <person name="Barron A."/>
            <person name="Bason N."/>
            <person name="Bentley S.D."/>
            <person name="Chillingworth C."/>
            <person name="Chillingworth T."/>
            <person name="Churcher C."/>
            <person name="Clark L."/>
            <person name="Corton C."/>
            <person name="Cronin A."/>
            <person name="Doggett J."/>
            <person name="Dowd L."/>
            <person name="Feltwell T."/>
            <person name="Hance Z."/>
            <person name="Harris B."/>
            <person name="Hauser H."/>
            <person name="Holroyd S."/>
            <person name="Jagels K."/>
            <person name="James K.D."/>
            <person name="Lennard N."/>
            <person name="Line A."/>
            <person name="Mayes R."/>
            <person name="Moule S."/>
            <person name="Mungall K."/>
            <person name="Ormond D."/>
            <person name="Quail M.A."/>
            <person name="Rabbinowitsch E."/>
            <person name="Rutherford K.M."/>
            <person name="Sanders M."/>
            <person name="Sharp S."/>
            <person name="Simmonds M."/>
            <person name="Stevens K."/>
            <person name="Whitehead S."/>
            <person name="Barrell B.G."/>
            <person name="Spratt B.G."/>
            <person name="Parkhill J."/>
        </authorList>
    </citation>
    <scope>NUCLEOTIDE SEQUENCE [LARGE SCALE GENOMIC DNA]</scope>
    <source>
        <strain>MRSA252</strain>
    </source>
</reference>
<organism>
    <name type="scientific">Staphylococcus aureus (strain MRSA252)</name>
    <dbReference type="NCBI Taxonomy" id="282458"/>
    <lineage>
        <taxon>Bacteria</taxon>
        <taxon>Bacillati</taxon>
        <taxon>Bacillota</taxon>
        <taxon>Bacilli</taxon>
        <taxon>Bacillales</taxon>
        <taxon>Staphylococcaceae</taxon>
        <taxon>Staphylococcus</taxon>
    </lineage>
</organism>